<proteinExistence type="inferred from homology"/>
<reference key="1">
    <citation type="journal article" date="2006" name="PLoS Genet.">
        <title>Secrets of soil survival revealed by the genome sequence of Arthrobacter aurescens TC1.</title>
        <authorList>
            <person name="Mongodin E.F."/>
            <person name="Shapir N."/>
            <person name="Daugherty S.C."/>
            <person name="DeBoy R.T."/>
            <person name="Emerson J.B."/>
            <person name="Shvartzbeyn A."/>
            <person name="Radune D."/>
            <person name="Vamathevan J."/>
            <person name="Riggs F."/>
            <person name="Grinberg V."/>
            <person name="Khouri H.M."/>
            <person name="Wackett L.P."/>
            <person name="Nelson K.E."/>
            <person name="Sadowsky M.J."/>
        </authorList>
    </citation>
    <scope>NUCLEOTIDE SEQUENCE [LARGE SCALE GENOMIC DNA]</scope>
    <source>
        <strain>TC1</strain>
    </source>
</reference>
<evidence type="ECO:0000255" key="1">
    <source>
        <dbReference type="HAMAP-Rule" id="MF_00452"/>
    </source>
</evidence>
<comment type="function">
    <text evidence="1">Catalyzes the conversion of oxaloacetate (OAA) to phosphoenolpyruvate (PEP), the rate-limiting step in the metabolic pathway that produces glucose from lactate and other precursors derived from the citric acid cycle.</text>
</comment>
<comment type="catalytic activity">
    <reaction evidence="1">
        <text>oxaloacetate + GTP = phosphoenolpyruvate + GDP + CO2</text>
        <dbReference type="Rhea" id="RHEA:10388"/>
        <dbReference type="ChEBI" id="CHEBI:16452"/>
        <dbReference type="ChEBI" id="CHEBI:16526"/>
        <dbReference type="ChEBI" id="CHEBI:37565"/>
        <dbReference type="ChEBI" id="CHEBI:58189"/>
        <dbReference type="ChEBI" id="CHEBI:58702"/>
        <dbReference type="EC" id="4.1.1.32"/>
    </reaction>
</comment>
<comment type="cofactor">
    <cofactor evidence="1">
        <name>Mn(2+)</name>
        <dbReference type="ChEBI" id="CHEBI:29035"/>
    </cofactor>
    <text evidence="1">Binds 1 Mn(2+) ion per subunit.</text>
</comment>
<comment type="pathway">
    <text evidence="1">Carbohydrate biosynthesis; gluconeogenesis.</text>
</comment>
<comment type="subunit">
    <text evidence="1">Monomer.</text>
</comment>
<comment type="subcellular location">
    <subcellularLocation>
        <location evidence="1">Cytoplasm</location>
    </subcellularLocation>
</comment>
<comment type="similarity">
    <text evidence="1">Belongs to the phosphoenolpyruvate carboxykinase [GTP] family.</text>
</comment>
<organism>
    <name type="scientific">Paenarthrobacter aurescens (strain TC1)</name>
    <dbReference type="NCBI Taxonomy" id="290340"/>
    <lineage>
        <taxon>Bacteria</taxon>
        <taxon>Bacillati</taxon>
        <taxon>Actinomycetota</taxon>
        <taxon>Actinomycetes</taxon>
        <taxon>Micrococcales</taxon>
        <taxon>Micrococcaceae</taxon>
        <taxon>Paenarthrobacter</taxon>
    </lineage>
</organism>
<feature type="chain" id="PRO_1000072369" description="Phosphoenolpyruvate carboxykinase [GTP]">
    <location>
        <begin position="1"/>
        <end position="608"/>
    </location>
</feature>
<feature type="active site" evidence="1">
    <location>
        <position position="275"/>
    </location>
</feature>
<feature type="binding site" evidence="1">
    <location>
        <position position="82"/>
    </location>
    <ligand>
        <name>substrate</name>
    </ligand>
</feature>
<feature type="binding site" evidence="1">
    <location>
        <begin position="222"/>
        <end position="224"/>
    </location>
    <ligand>
        <name>substrate</name>
    </ligand>
</feature>
<feature type="binding site" evidence="1">
    <location>
        <position position="231"/>
    </location>
    <ligand>
        <name>Mn(2+)</name>
        <dbReference type="ChEBI" id="CHEBI:29035"/>
    </ligand>
</feature>
<feature type="binding site" evidence="1">
    <location>
        <position position="251"/>
    </location>
    <ligand>
        <name>Mn(2+)</name>
        <dbReference type="ChEBI" id="CHEBI:29035"/>
    </ligand>
</feature>
<feature type="binding site" evidence="1">
    <location>
        <position position="273"/>
    </location>
    <ligand>
        <name>substrate</name>
    </ligand>
</feature>
<feature type="binding site" evidence="1">
    <location>
        <begin position="274"/>
        <end position="279"/>
    </location>
    <ligand>
        <name>GTP</name>
        <dbReference type="ChEBI" id="CHEBI:37565"/>
    </ligand>
</feature>
<feature type="binding site" evidence="1">
    <location>
        <position position="298"/>
    </location>
    <ligand>
        <name>Mn(2+)</name>
        <dbReference type="ChEBI" id="CHEBI:29035"/>
    </ligand>
</feature>
<feature type="binding site" evidence="1">
    <location>
        <begin position="389"/>
        <end position="391"/>
    </location>
    <ligand>
        <name>substrate</name>
    </ligand>
</feature>
<feature type="binding site" evidence="1">
    <location>
        <position position="391"/>
    </location>
    <ligand>
        <name>GTP</name>
        <dbReference type="ChEBI" id="CHEBI:37565"/>
    </ligand>
</feature>
<feature type="binding site" evidence="1">
    <location>
        <position position="422"/>
    </location>
    <ligand>
        <name>GTP</name>
        <dbReference type="ChEBI" id="CHEBI:37565"/>
    </ligand>
</feature>
<feature type="binding site" evidence="1">
    <location>
        <begin position="517"/>
        <end position="520"/>
    </location>
    <ligand>
        <name>GTP</name>
        <dbReference type="ChEBI" id="CHEBI:37565"/>
    </ligand>
</feature>
<dbReference type="EC" id="4.1.1.32" evidence="1"/>
<dbReference type="EMBL" id="CP000474">
    <property type="protein sequence ID" value="ABM06961.1"/>
    <property type="molecule type" value="Genomic_DNA"/>
</dbReference>
<dbReference type="RefSeq" id="WP_011773577.1">
    <property type="nucleotide sequence ID" value="NC_008711.1"/>
</dbReference>
<dbReference type="SMR" id="A1R317"/>
<dbReference type="STRING" id="290340.AAur_0832"/>
<dbReference type="KEGG" id="aau:AAur_0832"/>
<dbReference type="eggNOG" id="COG1274">
    <property type="taxonomic scope" value="Bacteria"/>
</dbReference>
<dbReference type="HOGENOM" id="CLU_028872_1_1_11"/>
<dbReference type="OrthoDB" id="9758871at2"/>
<dbReference type="UniPathway" id="UPA00138"/>
<dbReference type="Proteomes" id="UP000000637">
    <property type="component" value="Chromosome"/>
</dbReference>
<dbReference type="GO" id="GO:0005829">
    <property type="term" value="C:cytosol"/>
    <property type="evidence" value="ECO:0007669"/>
    <property type="project" value="TreeGrafter"/>
</dbReference>
<dbReference type="GO" id="GO:0005525">
    <property type="term" value="F:GTP binding"/>
    <property type="evidence" value="ECO:0007669"/>
    <property type="project" value="UniProtKB-UniRule"/>
</dbReference>
<dbReference type="GO" id="GO:0030145">
    <property type="term" value="F:manganese ion binding"/>
    <property type="evidence" value="ECO:0007669"/>
    <property type="project" value="UniProtKB-UniRule"/>
</dbReference>
<dbReference type="GO" id="GO:0004613">
    <property type="term" value="F:phosphoenolpyruvate carboxykinase (GTP) activity"/>
    <property type="evidence" value="ECO:0007669"/>
    <property type="project" value="UniProtKB-UniRule"/>
</dbReference>
<dbReference type="GO" id="GO:0071333">
    <property type="term" value="P:cellular response to glucose stimulus"/>
    <property type="evidence" value="ECO:0007669"/>
    <property type="project" value="TreeGrafter"/>
</dbReference>
<dbReference type="GO" id="GO:0006094">
    <property type="term" value="P:gluconeogenesis"/>
    <property type="evidence" value="ECO:0007669"/>
    <property type="project" value="UniProtKB-UniRule"/>
</dbReference>
<dbReference type="GO" id="GO:0046327">
    <property type="term" value="P:glycerol biosynthetic process from pyruvate"/>
    <property type="evidence" value="ECO:0007669"/>
    <property type="project" value="TreeGrafter"/>
</dbReference>
<dbReference type="GO" id="GO:0006107">
    <property type="term" value="P:oxaloacetate metabolic process"/>
    <property type="evidence" value="ECO:0007669"/>
    <property type="project" value="TreeGrafter"/>
</dbReference>
<dbReference type="GO" id="GO:0019543">
    <property type="term" value="P:propionate catabolic process"/>
    <property type="evidence" value="ECO:0007669"/>
    <property type="project" value="TreeGrafter"/>
</dbReference>
<dbReference type="GO" id="GO:0033993">
    <property type="term" value="P:response to lipid"/>
    <property type="evidence" value="ECO:0007669"/>
    <property type="project" value="TreeGrafter"/>
</dbReference>
<dbReference type="GO" id="GO:0042594">
    <property type="term" value="P:response to starvation"/>
    <property type="evidence" value="ECO:0007669"/>
    <property type="project" value="TreeGrafter"/>
</dbReference>
<dbReference type="CDD" id="cd00819">
    <property type="entry name" value="PEPCK_GTP"/>
    <property type="match status" value="1"/>
</dbReference>
<dbReference type="FunFam" id="3.40.449.10:FF:000005">
    <property type="entry name" value="Phosphoenolpyruvate carboxykinase [GTP]"/>
    <property type="match status" value="1"/>
</dbReference>
<dbReference type="Gene3D" id="3.90.228.20">
    <property type="match status" value="1"/>
</dbReference>
<dbReference type="Gene3D" id="3.40.449.10">
    <property type="entry name" value="Phosphoenolpyruvate Carboxykinase, domain 1"/>
    <property type="match status" value="1"/>
</dbReference>
<dbReference type="Gene3D" id="2.170.8.10">
    <property type="entry name" value="Phosphoenolpyruvate Carboxykinase, domain 2"/>
    <property type="match status" value="1"/>
</dbReference>
<dbReference type="HAMAP" id="MF_00452">
    <property type="entry name" value="PEPCK_GTP"/>
    <property type="match status" value="1"/>
</dbReference>
<dbReference type="InterPro" id="IPR018091">
    <property type="entry name" value="PEP_carboxykin_GTP_CS"/>
</dbReference>
<dbReference type="InterPro" id="IPR013035">
    <property type="entry name" value="PEP_carboxykinase_C"/>
</dbReference>
<dbReference type="InterPro" id="IPR008209">
    <property type="entry name" value="PEP_carboxykinase_GTP"/>
</dbReference>
<dbReference type="InterPro" id="IPR035077">
    <property type="entry name" value="PEP_carboxykinase_GTP_C"/>
</dbReference>
<dbReference type="InterPro" id="IPR035078">
    <property type="entry name" value="PEP_carboxykinase_GTP_N"/>
</dbReference>
<dbReference type="InterPro" id="IPR008210">
    <property type="entry name" value="PEP_carboxykinase_N"/>
</dbReference>
<dbReference type="NCBIfam" id="NF003253">
    <property type="entry name" value="PRK04210.1"/>
    <property type="match status" value="1"/>
</dbReference>
<dbReference type="PANTHER" id="PTHR11561">
    <property type="entry name" value="PHOSPHOENOLPYRUVATE CARBOXYKINASE"/>
    <property type="match status" value="1"/>
</dbReference>
<dbReference type="PANTHER" id="PTHR11561:SF0">
    <property type="entry name" value="PHOSPHOENOLPYRUVATE CARBOXYKINASE [GTP]-RELATED"/>
    <property type="match status" value="1"/>
</dbReference>
<dbReference type="Pfam" id="PF00821">
    <property type="entry name" value="PEPCK_GTP"/>
    <property type="match status" value="1"/>
</dbReference>
<dbReference type="Pfam" id="PF17297">
    <property type="entry name" value="PEPCK_N"/>
    <property type="match status" value="1"/>
</dbReference>
<dbReference type="PIRSF" id="PIRSF001348">
    <property type="entry name" value="PEP_carboxykinase_GTP"/>
    <property type="match status" value="1"/>
</dbReference>
<dbReference type="SUPFAM" id="SSF68923">
    <property type="entry name" value="PEP carboxykinase N-terminal domain"/>
    <property type="match status" value="1"/>
</dbReference>
<dbReference type="SUPFAM" id="SSF53795">
    <property type="entry name" value="PEP carboxykinase-like"/>
    <property type="match status" value="1"/>
</dbReference>
<dbReference type="PROSITE" id="PS00505">
    <property type="entry name" value="PEPCK_GTP"/>
    <property type="match status" value="1"/>
</dbReference>
<sequence>MGDLARLPLLEKAPTTHARLLAWVEEVAELTQPDRIHWVDGSEAENKKLTDELVEAGTLKRLNPETFPNSFAAFSDPADVARVEEQTFICSENERDAGFTNNWMAPAEMKQKLRGLFAGSMRGRTMYVIPFVMGHLDAEDPKFGVEITDSAYVVASMRIMARIGTDVLDRITQTDAFFVPALHSLGAPLEAGQADVAWPCNTDKWIVHFPEERSIWSFGSGYGGNALLGKKCYALRIASVMARDEGWLAEHMLILKLTSPEQKTYYISAAFPSACGKTNLALLDPTIKGWKVETLGDDITWMRFGKEGELRAVNPEAGLFGVAPGTGWGTNPNAMRAIAKGNSIFTNVALTDDGGVWWEGMTEETPAHLTDWRGESWTPDSDAPAAHPNSRFCTPIDQIDMLAEEYFSPEGVELSAILFGGRRKTTIPLVTEARNWSNGIFMGSTLSSETTAAAAGAVGVVRRDPMAMLPFIGYDAGDYLNHWVNLSAKANPERLPKIFLVNWFRRTAEGGFAWPGFGDNARVLKWAIERLEGKADAVETPIGFVPTGESIDLEGLDMTPAEVESAVRVDPAEWATELASIEEWFANFGESLPAALQSELDGLKTRLG</sequence>
<accession>A1R317</accession>
<keyword id="KW-0963">Cytoplasm</keyword>
<keyword id="KW-0210">Decarboxylase</keyword>
<keyword id="KW-0312">Gluconeogenesis</keyword>
<keyword id="KW-0342">GTP-binding</keyword>
<keyword id="KW-0456">Lyase</keyword>
<keyword id="KW-0464">Manganese</keyword>
<keyword id="KW-0479">Metal-binding</keyword>
<keyword id="KW-0547">Nucleotide-binding</keyword>
<name>PCKG_PAEAT</name>
<gene>
    <name evidence="1" type="primary">pckG</name>
    <name type="ordered locus">AAur_0832</name>
</gene>
<protein>
    <recommendedName>
        <fullName evidence="1">Phosphoenolpyruvate carboxykinase [GTP]</fullName>
        <shortName evidence="1">PEP carboxykinase</shortName>
        <shortName evidence="1">PEPCK</shortName>
        <ecNumber evidence="1">4.1.1.32</ecNumber>
    </recommendedName>
</protein>